<accession>Q5M627</accession>
<organism>
    <name type="scientific">Streptococcus thermophilus (strain ATCC BAA-250 / LMG 18311)</name>
    <dbReference type="NCBI Taxonomy" id="264199"/>
    <lineage>
        <taxon>Bacteria</taxon>
        <taxon>Bacillati</taxon>
        <taxon>Bacillota</taxon>
        <taxon>Bacilli</taxon>
        <taxon>Lactobacillales</taxon>
        <taxon>Streptococcaceae</taxon>
        <taxon>Streptococcus</taxon>
    </lineage>
</organism>
<feature type="chain" id="PRO_1000047632" description="Glutamate racemase">
    <location>
        <begin position="1"/>
        <end position="271"/>
    </location>
</feature>
<feature type="active site" description="Proton donor/acceptor" evidence="1">
    <location>
        <position position="73"/>
    </location>
</feature>
<feature type="active site" description="Proton donor/acceptor" evidence="1">
    <location>
        <position position="183"/>
    </location>
</feature>
<feature type="binding site" evidence="1">
    <location>
        <begin position="10"/>
        <end position="11"/>
    </location>
    <ligand>
        <name>substrate</name>
    </ligand>
</feature>
<feature type="binding site" evidence="1">
    <location>
        <begin position="42"/>
        <end position="43"/>
    </location>
    <ligand>
        <name>substrate</name>
    </ligand>
</feature>
<feature type="binding site" evidence="1">
    <location>
        <begin position="74"/>
        <end position="75"/>
    </location>
    <ligand>
        <name>substrate</name>
    </ligand>
</feature>
<feature type="binding site" evidence="1">
    <location>
        <begin position="184"/>
        <end position="185"/>
    </location>
    <ligand>
        <name>substrate</name>
    </ligand>
</feature>
<keyword id="KW-0133">Cell shape</keyword>
<keyword id="KW-0961">Cell wall biogenesis/degradation</keyword>
<keyword id="KW-0413">Isomerase</keyword>
<keyword id="KW-0573">Peptidoglycan synthesis</keyword>
<keyword id="KW-1185">Reference proteome</keyword>
<proteinExistence type="inferred from homology"/>
<protein>
    <recommendedName>
        <fullName evidence="1">Glutamate racemase</fullName>
        <ecNumber evidence="1">5.1.1.3</ecNumber>
    </recommendedName>
</protein>
<gene>
    <name evidence="1" type="primary">murI</name>
    <name type="ordered locus">stu0255</name>
</gene>
<reference key="1">
    <citation type="journal article" date="2004" name="Nat. Biotechnol.">
        <title>Complete sequence and comparative genome analysis of the dairy bacterium Streptococcus thermophilus.</title>
        <authorList>
            <person name="Bolotin A."/>
            <person name="Quinquis B."/>
            <person name="Renault P."/>
            <person name="Sorokin A."/>
            <person name="Ehrlich S.D."/>
            <person name="Kulakauskas S."/>
            <person name="Lapidus A."/>
            <person name="Goltsman E."/>
            <person name="Mazur M."/>
            <person name="Pusch G.D."/>
            <person name="Fonstein M."/>
            <person name="Overbeek R."/>
            <person name="Kyprides N."/>
            <person name="Purnelle B."/>
            <person name="Prozzi D."/>
            <person name="Ngui K."/>
            <person name="Masuy D."/>
            <person name="Hancy F."/>
            <person name="Burteau S."/>
            <person name="Boutry M."/>
            <person name="Delcour J."/>
            <person name="Goffeau A."/>
            <person name="Hols P."/>
        </authorList>
    </citation>
    <scope>NUCLEOTIDE SEQUENCE [LARGE SCALE GENOMIC DNA]</scope>
    <source>
        <strain>ATCC BAA-250 / LMG 18311</strain>
    </source>
</reference>
<comment type="function">
    <text evidence="1">Provides the (R)-glutamate required for cell wall biosynthesis.</text>
</comment>
<comment type="catalytic activity">
    <reaction evidence="1">
        <text>L-glutamate = D-glutamate</text>
        <dbReference type="Rhea" id="RHEA:12813"/>
        <dbReference type="ChEBI" id="CHEBI:29985"/>
        <dbReference type="ChEBI" id="CHEBI:29986"/>
        <dbReference type="EC" id="5.1.1.3"/>
    </reaction>
</comment>
<comment type="pathway">
    <text evidence="1">Cell wall biogenesis; peptidoglycan biosynthesis.</text>
</comment>
<comment type="similarity">
    <text evidence="1">Belongs to the aspartate/glutamate racemases family.</text>
</comment>
<name>MURI_STRT2</name>
<evidence type="ECO:0000255" key="1">
    <source>
        <dbReference type="HAMAP-Rule" id="MF_00258"/>
    </source>
</evidence>
<sequence length="271" mass="30059">MDNRPIGFLDSGVGGLTVVRELKRQLPYESIVYIGDSARAPYGPRPAGQIREYTWQLVKFLLTKDVKMIVIACNTATAVVWEEIKESLDIPVLGVVLPGSSAAIKSSRSGQIGVIGTPMTISSNIYEQKIKRLAPQMNVLSLSCPRFAPIVESNEINSSVAKKIVYESMAPLVDRVDTLVLGCTHYPLLRPIIQNVMGLSVKLIDSGAETVRDVSVLLNYFEINRSREVKDKTEEYYTTASVLGFKEIAEQWLGEEVTVQHVDLDKELEND</sequence>
<dbReference type="EC" id="5.1.1.3" evidence="1"/>
<dbReference type="EMBL" id="CP000023">
    <property type="protein sequence ID" value="AAV59979.1"/>
    <property type="molecule type" value="Genomic_DNA"/>
</dbReference>
<dbReference type="RefSeq" id="WP_011225436.1">
    <property type="nucleotide sequence ID" value="NC_006448.1"/>
</dbReference>
<dbReference type="SMR" id="Q5M627"/>
<dbReference type="STRING" id="264199.stu0255"/>
<dbReference type="GeneID" id="66898185"/>
<dbReference type="KEGG" id="stl:stu0255"/>
<dbReference type="PATRIC" id="fig|264199.4.peg.262"/>
<dbReference type="eggNOG" id="COG0796">
    <property type="taxonomic scope" value="Bacteria"/>
</dbReference>
<dbReference type="HOGENOM" id="CLU_052344_0_2_9"/>
<dbReference type="UniPathway" id="UPA00219"/>
<dbReference type="Proteomes" id="UP000001170">
    <property type="component" value="Chromosome"/>
</dbReference>
<dbReference type="GO" id="GO:0008881">
    <property type="term" value="F:glutamate racemase activity"/>
    <property type="evidence" value="ECO:0007669"/>
    <property type="project" value="UniProtKB-UniRule"/>
</dbReference>
<dbReference type="GO" id="GO:0071555">
    <property type="term" value="P:cell wall organization"/>
    <property type="evidence" value="ECO:0007669"/>
    <property type="project" value="UniProtKB-KW"/>
</dbReference>
<dbReference type="GO" id="GO:0009252">
    <property type="term" value="P:peptidoglycan biosynthetic process"/>
    <property type="evidence" value="ECO:0007669"/>
    <property type="project" value="UniProtKB-UniRule"/>
</dbReference>
<dbReference type="GO" id="GO:0008360">
    <property type="term" value="P:regulation of cell shape"/>
    <property type="evidence" value="ECO:0007669"/>
    <property type="project" value="UniProtKB-KW"/>
</dbReference>
<dbReference type="FunFam" id="3.40.50.1860:FF:000002">
    <property type="entry name" value="Glutamate racemase"/>
    <property type="match status" value="1"/>
</dbReference>
<dbReference type="Gene3D" id="3.40.50.1860">
    <property type="match status" value="2"/>
</dbReference>
<dbReference type="HAMAP" id="MF_00258">
    <property type="entry name" value="Glu_racemase"/>
    <property type="match status" value="1"/>
</dbReference>
<dbReference type="InterPro" id="IPR015942">
    <property type="entry name" value="Asp/Glu/hydantoin_racemase"/>
</dbReference>
<dbReference type="InterPro" id="IPR001920">
    <property type="entry name" value="Asp/Glu_race"/>
</dbReference>
<dbReference type="InterPro" id="IPR018187">
    <property type="entry name" value="Asp/Glu_racemase_AS_1"/>
</dbReference>
<dbReference type="InterPro" id="IPR033134">
    <property type="entry name" value="Asp/Glu_racemase_AS_2"/>
</dbReference>
<dbReference type="InterPro" id="IPR004391">
    <property type="entry name" value="Glu_race"/>
</dbReference>
<dbReference type="NCBIfam" id="TIGR00067">
    <property type="entry name" value="glut_race"/>
    <property type="match status" value="1"/>
</dbReference>
<dbReference type="NCBIfam" id="NF002035">
    <property type="entry name" value="PRK00865.1-3"/>
    <property type="match status" value="1"/>
</dbReference>
<dbReference type="PANTHER" id="PTHR21198">
    <property type="entry name" value="GLUTAMATE RACEMASE"/>
    <property type="match status" value="1"/>
</dbReference>
<dbReference type="PANTHER" id="PTHR21198:SF2">
    <property type="entry name" value="GLUTAMATE RACEMASE"/>
    <property type="match status" value="1"/>
</dbReference>
<dbReference type="Pfam" id="PF01177">
    <property type="entry name" value="Asp_Glu_race"/>
    <property type="match status" value="1"/>
</dbReference>
<dbReference type="SUPFAM" id="SSF53681">
    <property type="entry name" value="Aspartate/glutamate racemase"/>
    <property type="match status" value="2"/>
</dbReference>
<dbReference type="PROSITE" id="PS00923">
    <property type="entry name" value="ASP_GLU_RACEMASE_1"/>
    <property type="match status" value="1"/>
</dbReference>
<dbReference type="PROSITE" id="PS00924">
    <property type="entry name" value="ASP_GLU_RACEMASE_2"/>
    <property type="match status" value="1"/>
</dbReference>